<accession>B5BDA1</accession>
<reference key="1">
    <citation type="journal article" date="2009" name="BMC Genomics">
        <title>Pseudogene accumulation in the evolutionary histories of Salmonella enterica serovars Paratyphi A and Typhi.</title>
        <authorList>
            <person name="Holt K.E."/>
            <person name="Thomson N.R."/>
            <person name="Wain J."/>
            <person name="Langridge G.C."/>
            <person name="Hasan R."/>
            <person name="Bhutta Z.A."/>
            <person name="Quail M.A."/>
            <person name="Norbertczak H."/>
            <person name="Walker D."/>
            <person name="Simmonds M."/>
            <person name="White B."/>
            <person name="Bason N."/>
            <person name="Mungall K."/>
            <person name="Dougan G."/>
            <person name="Parkhill J."/>
        </authorList>
    </citation>
    <scope>NUCLEOTIDE SEQUENCE [LARGE SCALE GENOMIC DNA]</scope>
    <source>
        <strain>AKU_12601</strain>
    </source>
</reference>
<protein>
    <recommendedName>
        <fullName evidence="1">2-aminoethylphosphonate--pyruvate transaminase</fullName>
        <ecNumber evidence="1">2.6.1.37</ecNumber>
    </recommendedName>
    <alternativeName>
        <fullName evidence="1">2-aminoethylphosphonate aminotransferase</fullName>
    </alternativeName>
    <alternativeName>
        <fullName evidence="1">AEP transaminase</fullName>
        <shortName evidence="1">AEPT</shortName>
    </alternativeName>
</protein>
<gene>
    <name evidence="1" type="primary">phnW</name>
    <name type="ordered locus">SSPA2134</name>
</gene>
<dbReference type="EC" id="2.6.1.37" evidence="1"/>
<dbReference type="EMBL" id="FM200053">
    <property type="protein sequence ID" value="CAR60344.1"/>
    <property type="molecule type" value="Genomic_DNA"/>
</dbReference>
<dbReference type="RefSeq" id="WP_000203964.1">
    <property type="nucleotide sequence ID" value="NC_011147.1"/>
</dbReference>
<dbReference type="SMR" id="B5BDA1"/>
<dbReference type="KEGG" id="sek:SSPA2134"/>
<dbReference type="HOGENOM" id="CLU_027686_3_1_6"/>
<dbReference type="Proteomes" id="UP000001869">
    <property type="component" value="Chromosome"/>
</dbReference>
<dbReference type="GO" id="GO:0047304">
    <property type="term" value="F:2-aminoethylphosphonate-pyruvate transaminase activity"/>
    <property type="evidence" value="ECO:0007669"/>
    <property type="project" value="UniProtKB-UniRule"/>
</dbReference>
<dbReference type="GO" id="GO:0019700">
    <property type="term" value="P:organic phosphonate catabolic process"/>
    <property type="evidence" value="ECO:0007669"/>
    <property type="project" value="InterPro"/>
</dbReference>
<dbReference type="Gene3D" id="3.90.1150.10">
    <property type="entry name" value="Aspartate Aminotransferase, domain 1"/>
    <property type="match status" value="1"/>
</dbReference>
<dbReference type="Gene3D" id="3.40.640.10">
    <property type="entry name" value="Type I PLP-dependent aspartate aminotransferase-like (Major domain)"/>
    <property type="match status" value="1"/>
</dbReference>
<dbReference type="HAMAP" id="MF_01376">
    <property type="entry name" value="PhnW_aminotrans_5"/>
    <property type="match status" value="1"/>
</dbReference>
<dbReference type="InterPro" id="IPR000192">
    <property type="entry name" value="Aminotrans_V_dom"/>
</dbReference>
<dbReference type="InterPro" id="IPR012703">
    <property type="entry name" value="NH2EtPonate_pyrv_transaminase"/>
</dbReference>
<dbReference type="InterPro" id="IPR015424">
    <property type="entry name" value="PyrdxlP-dep_Trfase"/>
</dbReference>
<dbReference type="InterPro" id="IPR015421">
    <property type="entry name" value="PyrdxlP-dep_Trfase_major"/>
</dbReference>
<dbReference type="InterPro" id="IPR015422">
    <property type="entry name" value="PyrdxlP-dep_Trfase_small"/>
</dbReference>
<dbReference type="InterPro" id="IPR024169">
    <property type="entry name" value="SP_NH2Trfase/AEP_transaminase"/>
</dbReference>
<dbReference type="NCBIfam" id="TIGR03301">
    <property type="entry name" value="PhnW-AepZ"/>
    <property type="match status" value="1"/>
</dbReference>
<dbReference type="NCBIfam" id="NF010006">
    <property type="entry name" value="PRK13479.1"/>
    <property type="match status" value="1"/>
</dbReference>
<dbReference type="NCBIfam" id="TIGR02326">
    <property type="entry name" value="transamin_PhnW"/>
    <property type="match status" value="1"/>
</dbReference>
<dbReference type="PANTHER" id="PTHR42778">
    <property type="entry name" value="2-AMINOETHYLPHOSPHONATE--PYRUVATE TRANSAMINASE"/>
    <property type="match status" value="1"/>
</dbReference>
<dbReference type="PANTHER" id="PTHR42778:SF1">
    <property type="entry name" value="2-AMINOETHYLPHOSPHONATE--PYRUVATE TRANSAMINASE"/>
    <property type="match status" value="1"/>
</dbReference>
<dbReference type="Pfam" id="PF00266">
    <property type="entry name" value="Aminotran_5"/>
    <property type="match status" value="1"/>
</dbReference>
<dbReference type="PIRSF" id="PIRSF000524">
    <property type="entry name" value="SPT"/>
    <property type="match status" value="1"/>
</dbReference>
<dbReference type="SUPFAM" id="SSF53383">
    <property type="entry name" value="PLP-dependent transferases"/>
    <property type="match status" value="1"/>
</dbReference>
<evidence type="ECO:0000255" key="1">
    <source>
        <dbReference type="HAMAP-Rule" id="MF_01376"/>
    </source>
</evidence>
<feature type="chain" id="PRO_1000144860" description="2-aminoethylphosphonate--pyruvate transaminase">
    <location>
        <begin position="1"/>
        <end position="367"/>
    </location>
</feature>
<feature type="modified residue" description="N6-(pyridoxal phosphate)lysine" evidence="1">
    <location>
        <position position="194"/>
    </location>
</feature>
<name>PHNW_SALPK</name>
<keyword id="KW-0032">Aminotransferase</keyword>
<keyword id="KW-0663">Pyridoxal phosphate</keyword>
<keyword id="KW-0670">Pyruvate</keyword>
<keyword id="KW-0808">Transferase</keyword>
<organism>
    <name type="scientific">Salmonella paratyphi A (strain AKU_12601)</name>
    <dbReference type="NCBI Taxonomy" id="554290"/>
    <lineage>
        <taxon>Bacteria</taxon>
        <taxon>Pseudomonadati</taxon>
        <taxon>Pseudomonadota</taxon>
        <taxon>Gammaproteobacteria</taxon>
        <taxon>Enterobacterales</taxon>
        <taxon>Enterobacteriaceae</taxon>
        <taxon>Salmonella</taxon>
    </lineage>
</organism>
<sequence length="367" mass="40296">MTSRNYLLLTPGPLTTSRTVKEAMLFDSCTWDDDYNIGVVEQIRQQLTALATASEGYTSVLLQGSGSYAVEAVLGSALGPQDKVLIVSNGAYGARMVEMAGLMGIAHHAYDCGEVARPDVQAIDAILNVDPTISHIAMVHSETTTGMLNPIDEVGALAHRYGKTYIVDAMSSFGGIPMDIAALHIDYLISSANKCIQGVPGFAFVIAREQKLAACKGRSRSLSLDLYAQWRCMEDNHGKWRFTSPTHTVLAFAQALKELAKEGGVAARHQRYQQNQRSLVAGMRALGFNTLLDDELHSPIITAFYSPEDPQYRFSEFYRRLKEQGFVIYPGKVSQSDCFRIGNIGEVYAADITALLTAIRTAMYWTK</sequence>
<comment type="function">
    <text evidence="1">Involved in phosphonate degradation.</text>
</comment>
<comment type="catalytic activity">
    <reaction evidence="1">
        <text>(2-aminoethyl)phosphonate + pyruvate = phosphonoacetaldehyde + L-alanine</text>
        <dbReference type="Rhea" id="RHEA:17021"/>
        <dbReference type="ChEBI" id="CHEBI:15361"/>
        <dbReference type="ChEBI" id="CHEBI:57418"/>
        <dbReference type="ChEBI" id="CHEBI:57972"/>
        <dbReference type="ChEBI" id="CHEBI:58383"/>
        <dbReference type="EC" id="2.6.1.37"/>
    </reaction>
</comment>
<comment type="cofactor">
    <cofactor evidence="1">
        <name>pyridoxal 5'-phosphate</name>
        <dbReference type="ChEBI" id="CHEBI:597326"/>
    </cofactor>
</comment>
<comment type="subunit">
    <text evidence="1">Homodimer.</text>
</comment>
<comment type="similarity">
    <text evidence="1">Belongs to the class-V pyridoxal-phosphate-dependent aminotransferase family. PhnW subfamily.</text>
</comment>
<proteinExistence type="inferred from homology"/>